<evidence type="ECO:0000255" key="1">
    <source>
        <dbReference type="HAMAP-Rule" id="MF_01848"/>
    </source>
</evidence>
<comment type="function">
    <text evidence="1">Specifically methylates the adenine in position 1618 of 23S rRNA.</text>
</comment>
<comment type="catalytic activity">
    <reaction evidence="1">
        <text>adenosine(1618) in 23S rRNA + S-adenosyl-L-methionine = N(6)-methyladenosine(1618) in 23S rRNA + S-adenosyl-L-homocysteine + H(+)</text>
        <dbReference type="Rhea" id="RHEA:16497"/>
        <dbReference type="Rhea" id="RHEA-COMP:10229"/>
        <dbReference type="Rhea" id="RHEA-COMP:10231"/>
        <dbReference type="ChEBI" id="CHEBI:15378"/>
        <dbReference type="ChEBI" id="CHEBI:57856"/>
        <dbReference type="ChEBI" id="CHEBI:59789"/>
        <dbReference type="ChEBI" id="CHEBI:74411"/>
        <dbReference type="ChEBI" id="CHEBI:74449"/>
        <dbReference type="EC" id="2.1.1.181"/>
    </reaction>
</comment>
<comment type="subcellular location">
    <subcellularLocation>
        <location evidence="1">Cytoplasm</location>
    </subcellularLocation>
</comment>
<comment type="similarity">
    <text evidence="1">Belongs to the methyltransferase superfamily. METTL16/RlmF family.</text>
</comment>
<dbReference type="EC" id="2.1.1.181" evidence="1"/>
<dbReference type="EMBL" id="AE015451">
    <property type="protein sequence ID" value="AAN66601.1"/>
    <property type="molecule type" value="Genomic_DNA"/>
</dbReference>
<dbReference type="RefSeq" id="NP_743137.1">
    <property type="nucleotide sequence ID" value="NC_002947.4"/>
</dbReference>
<dbReference type="RefSeq" id="WP_010952165.1">
    <property type="nucleotide sequence ID" value="NZ_CP169744.1"/>
</dbReference>
<dbReference type="SMR" id="Q88P77"/>
<dbReference type="STRING" id="160488.PP_0976"/>
<dbReference type="PaxDb" id="160488-PP_0976"/>
<dbReference type="GeneID" id="83678328"/>
<dbReference type="KEGG" id="ppu:PP_0976"/>
<dbReference type="PATRIC" id="fig|160488.4.peg.1037"/>
<dbReference type="eggNOG" id="COG3129">
    <property type="taxonomic scope" value="Bacteria"/>
</dbReference>
<dbReference type="HOGENOM" id="CLU_027534_3_0_6"/>
<dbReference type="OrthoDB" id="1115728at2"/>
<dbReference type="PhylomeDB" id="Q88P77"/>
<dbReference type="BioCyc" id="PPUT160488:G1G01-1049-MONOMER"/>
<dbReference type="Proteomes" id="UP000000556">
    <property type="component" value="Chromosome"/>
</dbReference>
<dbReference type="GO" id="GO:0005737">
    <property type="term" value="C:cytoplasm"/>
    <property type="evidence" value="ECO:0007669"/>
    <property type="project" value="UniProtKB-SubCell"/>
</dbReference>
<dbReference type="GO" id="GO:0052907">
    <property type="term" value="F:23S rRNA (adenine(1618)-N(6))-methyltransferase activity"/>
    <property type="evidence" value="ECO:0007669"/>
    <property type="project" value="UniProtKB-EC"/>
</dbReference>
<dbReference type="GO" id="GO:0070475">
    <property type="term" value="P:rRNA base methylation"/>
    <property type="evidence" value="ECO:0007669"/>
    <property type="project" value="TreeGrafter"/>
</dbReference>
<dbReference type="CDD" id="cd02440">
    <property type="entry name" value="AdoMet_MTases"/>
    <property type="match status" value="1"/>
</dbReference>
<dbReference type="Gene3D" id="3.40.50.150">
    <property type="entry name" value="Vaccinia Virus protein VP39"/>
    <property type="match status" value="1"/>
</dbReference>
<dbReference type="HAMAP" id="MF_01848">
    <property type="entry name" value="23SrRNA_methyltr_F"/>
    <property type="match status" value="1"/>
</dbReference>
<dbReference type="InterPro" id="IPR010286">
    <property type="entry name" value="METTL16/RlmF"/>
</dbReference>
<dbReference type="InterPro" id="IPR016909">
    <property type="entry name" value="rRNA_lsu_MeTfrase_F"/>
</dbReference>
<dbReference type="InterPro" id="IPR029063">
    <property type="entry name" value="SAM-dependent_MTases_sf"/>
</dbReference>
<dbReference type="NCBIfam" id="NF008725">
    <property type="entry name" value="PRK11727.1"/>
    <property type="match status" value="1"/>
</dbReference>
<dbReference type="PANTHER" id="PTHR13393:SF0">
    <property type="entry name" value="RNA N6-ADENOSINE-METHYLTRANSFERASE METTL16"/>
    <property type="match status" value="1"/>
</dbReference>
<dbReference type="PANTHER" id="PTHR13393">
    <property type="entry name" value="SAM-DEPENDENT METHYLTRANSFERASE"/>
    <property type="match status" value="1"/>
</dbReference>
<dbReference type="Pfam" id="PF05971">
    <property type="entry name" value="Methyltransf_10"/>
    <property type="match status" value="1"/>
</dbReference>
<dbReference type="PIRSF" id="PIRSF029038">
    <property type="entry name" value="Mtase_YbiN_prd"/>
    <property type="match status" value="1"/>
</dbReference>
<dbReference type="SUPFAM" id="SSF53335">
    <property type="entry name" value="S-adenosyl-L-methionine-dependent methyltransferases"/>
    <property type="match status" value="1"/>
</dbReference>
<feature type="chain" id="PRO_0000349934" description="Ribosomal RNA large subunit methyltransferase F">
    <location>
        <begin position="1"/>
        <end position="317"/>
    </location>
</feature>
<organism>
    <name type="scientific">Pseudomonas putida (strain ATCC 47054 / DSM 6125 / CFBP 8728 / NCIMB 11950 / KT2440)</name>
    <dbReference type="NCBI Taxonomy" id="160488"/>
    <lineage>
        <taxon>Bacteria</taxon>
        <taxon>Pseudomonadati</taxon>
        <taxon>Pseudomonadota</taxon>
        <taxon>Gammaproteobacteria</taxon>
        <taxon>Pseudomonadales</taxon>
        <taxon>Pseudomonadaceae</taxon>
        <taxon>Pseudomonas</taxon>
    </lineage>
</organism>
<reference key="1">
    <citation type="journal article" date="2002" name="Environ. Microbiol.">
        <title>Complete genome sequence and comparative analysis of the metabolically versatile Pseudomonas putida KT2440.</title>
        <authorList>
            <person name="Nelson K.E."/>
            <person name="Weinel C."/>
            <person name="Paulsen I.T."/>
            <person name="Dodson R.J."/>
            <person name="Hilbert H."/>
            <person name="Martins dos Santos V.A.P."/>
            <person name="Fouts D.E."/>
            <person name="Gill S.R."/>
            <person name="Pop M."/>
            <person name="Holmes M."/>
            <person name="Brinkac L.M."/>
            <person name="Beanan M.J."/>
            <person name="DeBoy R.T."/>
            <person name="Daugherty S.C."/>
            <person name="Kolonay J.F."/>
            <person name="Madupu R."/>
            <person name="Nelson W.C."/>
            <person name="White O."/>
            <person name="Peterson J.D."/>
            <person name="Khouri H.M."/>
            <person name="Hance I."/>
            <person name="Chris Lee P."/>
            <person name="Holtzapple E.K."/>
            <person name="Scanlan D."/>
            <person name="Tran K."/>
            <person name="Moazzez A."/>
            <person name="Utterback T.R."/>
            <person name="Rizzo M."/>
            <person name="Lee K."/>
            <person name="Kosack D."/>
            <person name="Moestl D."/>
            <person name="Wedler H."/>
            <person name="Lauber J."/>
            <person name="Stjepandic D."/>
            <person name="Hoheisel J."/>
            <person name="Straetz M."/>
            <person name="Heim S."/>
            <person name="Kiewitz C."/>
            <person name="Eisen J.A."/>
            <person name="Timmis K.N."/>
            <person name="Duesterhoeft A."/>
            <person name="Tuemmler B."/>
            <person name="Fraser C.M."/>
        </authorList>
    </citation>
    <scope>NUCLEOTIDE SEQUENCE [LARGE SCALE GENOMIC DNA]</scope>
    <source>
        <strain>ATCC 47054 / DSM 6125 / CFBP 8728 / NCIMB 11950 / KT2440</strain>
    </source>
</reference>
<name>RLMF_PSEPK</name>
<protein>
    <recommendedName>
        <fullName evidence="1">Ribosomal RNA large subunit methyltransferase F</fullName>
        <ecNumber evidence="1">2.1.1.181</ecNumber>
    </recommendedName>
    <alternativeName>
        <fullName evidence="1">23S rRNA mA1618 methyltransferase</fullName>
    </alternativeName>
    <alternativeName>
        <fullName evidence="1">rRNA adenine N-6-methyltransferase</fullName>
    </alternativeName>
</protein>
<keyword id="KW-0963">Cytoplasm</keyword>
<keyword id="KW-0489">Methyltransferase</keyword>
<keyword id="KW-1185">Reference proteome</keyword>
<keyword id="KW-0698">rRNA processing</keyword>
<keyword id="KW-0949">S-adenosyl-L-methionine</keyword>
<keyword id="KW-0808">Transferase</keyword>
<gene>
    <name evidence="1" type="primary">rlmF</name>
    <name type="ordered locus">PP_0976</name>
</gene>
<sequence>MTPNKPTLHPRNRHQGRYDFPSLIKAHPDLARFTITNPHGKPSIDFANPEAVRVFNRALLKAQYGIQHWDIPADYLCPPIPGRADYIHVAADLLADDNAGDVPRGAQVRALDIGVGANCIYPLLGYSDYRWRFLGSDIDPVALASAKAIVQANGLGKAITLRQQANRAHILSGLLQEGERFDLTLCNPPFHASRDEATRGSQRKWKNLGKQDPKRKLPVLNFGGQNNELWCEGGEIRFVTQLIGESVQYAERVLWFTSLVSKASNLPGIEAALKKSGAKAVRIIEMGQGQKQSRMVAWSFLDDAARQAWHAQRKSQA</sequence>
<accession>Q88P77</accession>
<proteinExistence type="inferred from homology"/>